<sequence length="445" mass="47559">MSKKYFGTDGIRGRVGEYPITPDFMLKLGWAAGMAFRKMGACKVLVGKDTRISGYMFESALEAGLTSAGADVMLLGPMPTPAIAYLSRTFQAEAGIVISASHNPHDDNGIKFFSGKGTKLPDELELMIEELLDTPMTVVESSKIGKVSRINDASGRYIEFCKSSVPTGTSFSGLRIVIDCAHGATYKVAPSVFRELGAEVVVLSAQPNGLNINDNCGSTHMGQLQAAVLSEHADLGIAFDGDGDRVLMVDHTGAIVDGDELLYIIARDLHERGKLQGGVVGTLMSNLGLELALADLGIPFVRANVGDRYVIAELLERNWLVGGENSGHVVCFNHTTTGDAIIAALQVLMALKTRNEGLAQTRQALRKCPQVLINVRFGGGESPLEHPAVKEASARVTQAMAGRGRVLLRKSGTEPLVRVMVEGEDESQVRGYAEELAKLVTEVSA</sequence>
<organism>
    <name type="scientific">Pseudomonas fluorescens (strain Pf0-1)</name>
    <dbReference type="NCBI Taxonomy" id="205922"/>
    <lineage>
        <taxon>Bacteria</taxon>
        <taxon>Pseudomonadati</taxon>
        <taxon>Pseudomonadota</taxon>
        <taxon>Gammaproteobacteria</taxon>
        <taxon>Pseudomonadales</taxon>
        <taxon>Pseudomonadaceae</taxon>
        <taxon>Pseudomonas</taxon>
    </lineage>
</organism>
<dbReference type="EC" id="5.4.2.10" evidence="1"/>
<dbReference type="EMBL" id="CP000094">
    <property type="protein sequence ID" value="ABA72517.1"/>
    <property type="molecule type" value="Genomic_DNA"/>
</dbReference>
<dbReference type="RefSeq" id="WP_011332405.1">
    <property type="nucleotide sequence ID" value="NC_007492.2"/>
</dbReference>
<dbReference type="SMR" id="Q3KI89"/>
<dbReference type="KEGG" id="pfo:Pfl01_0774"/>
<dbReference type="eggNOG" id="COG1109">
    <property type="taxonomic scope" value="Bacteria"/>
</dbReference>
<dbReference type="HOGENOM" id="CLU_016950_7_0_6"/>
<dbReference type="Proteomes" id="UP000002704">
    <property type="component" value="Chromosome"/>
</dbReference>
<dbReference type="GO" id="GO:0005829">
    <property type="term" value="C:cytosol"/>
    <property type="evidence" value="ECO:0007669"/>
    <property type="project" value="TreeGrafter"/>
</dbReference>
<dbReference type="GO" id="GO:0000287">
    <property type="term" value="F:magnesium ion binding"/>
    <property type="evidence" value="ECO:0007669"/>
    <property type="project" value="UniProtKB-UniRule"/>
</dbReference>
<dbReference type="GO" id="GO:0008966">
    <property type="term" value="F:phosphoglucosamine mutase activity"/>
    <property type="evidence" value="ECO:0007669"/>
    <property type="project" value="UniProtKB-UniRule"/>
</dbReference>
<dbReference type="GO" id="GO:0004615">
    <property type="term" value="F:phosphomannomutase activity"/>
    <property type="evidence" value="ECO:0007669"/>
    <property type="project" value="TreeGrafter"/>
</dbReference>
<dbReference type="GO" id="GO:0005975">
    <property type="term" value="P:carbohydrate metabolic process"/>
    <property type="evidence" value="ECO:0007669"/>
    <property type="project" value="InterPro"/>
</dbReference>
<dbReference type="GO" id="GO:0009252">
    <property type="term" value="P:peptidoglycan biosynthetic process"/>
    <property type="evidence" value="ECO:0007669"/>
    <property type="project" value="TreeGrafter"/>
</dbReference>
<dbReference type="GO" id="GO:0006048">
    <property type="term" value="P:UDP-N-acetylglucosamine biosynthetic process"/>
    <property type="evidence" value="ECO:0007669"/>
    <property type="project" value="TreeGrafter"/>
</dbReference>
<dbReference type="CDD" id="cd05802">
    <property type="entry name" value="GlmM"/>
    <property type="match status" value="1"/>
</dbReference>
<dbReference type="FunFam" id="3.30.310.50:FF:000001">
    <property type="entry name" value="Phosphoglucosamine mutase"/>
    <property type="match status" value="1"/>
</dbReference>
<dbReference type="FunFam" id="3.40.120.10:FF:000001">
    <property type="entry name" value="Phosphoglucosamine mutase"/>
    <property type="match status" value="1"/>
</dbReference>
<dbReference type="FunFam" id="3.40.120.10:FF:000003">
    <property type="entry name" value="Phosphoglucosamine mutase"/>
    <property type="match status" value="1"/>
</dbReference>
<dbReference type="Gene3D" id="3.40.120.10">
    <property type="entry name" value="Alpha-D-Glucose-1,6-Bisphosphate, subunit A, domain 3"/>
    <property type="match status" value="3"/>
</dbReference>
<dbReference type="Gene3D" id="3.30.310.50">
    <property type="entry name" value="Alpha-D-phosphohexomutase, C-terminal domain"/>
    <property type="match status" value="1"/>
</dbReference>
<dbReference type="HAMAP" id="MF_01554_B">
    <property type="entry name" value="GlmM_B"/>
    <property type="match status" value="1"/>
</dbReference>
<dbReference type="InterPro" id="IPR005844">
    <property type="entry name" value="A-D-PHexomutase_a/b/a-I"/>
</dbReference>
<dbReference type="InterPro" id="IPR016055">
    <property type="entry name" value="A-D-PHexomutase_a/b/a-I/II/III"/>
</dbReference>
<dbReference type="InterPro" id="IPR005845">
    <property type="entry name" value="A-D-PHexomutase_a/b/a-II"/>
</dbReference>
<dbReference type="InterPro" id="IPR005846">
    <property type="entry name" value="A-D-PHexomutase_a/b/a-III"/>
</dbReference>
<dbReference type="InterPro" id="IPR005843">
    <property type="entry name" value="A-D-PHexomutase_C"/>
</dbReference>
<dbReference type="InterPro" id="IPR036900">
    <property type="entry name" value="A-D-PHexomutase_C_sf"/>
</dbReference>
<dbReference type="InterPro" id="IPR016066">
    <property type="entry name" value="A-D-PHexomutase_CS"/>
</dbReference>
<dbReference type="InterPro" id="IPR005841">
    <property type="entry name" value="Alpha-D-phosphohexomutase_SF"/>
</dbReference>
<dbReference type="InterPro" id="IPR006352">
    <property type="entry name" value="GlmM_bact"/>
</dbReference>
<dbReference type="InterPro" id="IPR050060">
    <property type="entry name" value="Phosphoglucosamine_mutase"/>
</dbReference>
<dbReference type="NCBIfam" id="TIGR01455">
    <property type="entry name" value="glmM"/>
    <property type="match status" value="1"/>
</dbReference>
<dbReference type="NCBIfam" id="NF008139">
    <property type="entry name" value="PRK10887.1"/>
    <property type="match status" value="1"/>
</dbReference>
<dbReference type="PANTHER" id="PTHR42946:SF1">
    <property type="entry name" value="PHOSPHOGLUCOMUTASE (ALPHA-D-GLUCOSE-1,6-BISPHOSPHATE-DEPENDENT)"/>
    <property type="match status" value="1"/>
</dbReference>
<dbReference type="PANTHER" id="PTHR42946">
    <property type="entry name" value="PHOSPHOHEXOSE MUTASE"/>
    <property type="match status" value="1"/>
</dbReference>
<dbReference type="Pfam" id="PF02878">
    <property type="entry name" value="PGM_PMM_I"/>
    <property type="match status" value="1"/>
</dbReference>
<dbReference type="Pfam" id="PF02879">
    <property type="entry name" value="PGM_PMM_II"/>
    <property type="match status" value="1"/>
</dbReference>
<dbReference type="Pfam" id="PF02880">
    <property type="entry name" value="PGM_PMM_III"/>
    <property type="match status" value="1"/>
</dbReference>
<dbReference type="Pfam" id="PF00408">
    <property type="entry name" value="PGM_PMM_IV"/>
    <property type="match status" value="1"/>
</dbReference>
<dbReference type="PRINTS" id="PR00509">
    <property type="entry name" value="PGMPMM"/>
</dbReference>
<dbReference type="SUPFAM" id="SSF55957">
    <property type="entry name" value="Phosphoglucomutase, C-terminal domain"/>
    <property type="match status" value="1"/>
</dbReference>
<dbReference type="SUPFAM" id="SSF53738">
    <property type="entry name" value="Phosphoglucomutase, first 3 domains"/>
    <property type="match status" value="3"/>
</dbReference>
<dbReference type="PROSITE" id="PS00710">
    <property type="entry name" value="PGM_PMM"/>
    <property type="match status" value="1"/>
</dbReference>
<proteinExistence type="inferred from homology"/>
<protein>
    <recommendedName>
        <fullName evidence="1">Phosphoglucosamine mutase</fullName>
        <ecNumber evidence="1">5.4.2.10</ecNumber>
    </recommendedName>
</protein>
<evidence type="ECO:0000255" key="1">
    <source>
        <dbReference type="HAMAP-Rule" id="MF_01554"/>
    </source>
</evidence>
<keyword id="KW-0413">Isomerase</keyword>
<keyword id="KW-0460">Magnesium</keyword>
<keyword id="KW-0479">Metal-binding</keyword>
<keyword id="KW-0597">Phosphoprotein</keyword>
<gene>
    <name evidence="1" type="primary">glmM</name>
    <name type="ordered locus">Pfl01_0774</name>
</gene>
<name>GLMM_PSEPF</name>
<feature type="chain" id="PRO_0000301360" description="Phosphoglucosamine mutase">
    <location>
        <begin position="1"/>
        <end position="445"/>
    </location>
</feature>
<feature type="active site" description="Phosphoserine intermediate" evidence="1">
    <location>
        <position position="101"/>
    </location>
</feature>
<feature type="binding site" description="via phosphate group" evidence="1">
    <location>
        <position position="101"/>
    </location>
    <ligand>
        <name>Mg(2+)</name>
        <dbReference type="ChEBI" id="CHEBI:18420"/>
    </ligand>
</feature>
<feature type="binding site" evidence="1">
    <location>
        <position position="240"/>
    </location>
    <ligand>
        <name>Mg(2+)</name>
        <dbReference type="ChEBI" id="CHEBI:18420"/>
    </ligand>
</feature>
<feature type="binding site" evidence="1">
    <location>
        <position position="242"/>
    </location>
    <ligand>
        <name>Mg(2+)</name>
        <dbReference type="ChEBI" id="CHEBI:18420"/>
    </ligand>
</feature>
<feature type="binding site" evidence="1">
    <location>
        <position position="244"/>
    </location>
    <ligand>
        <name>Mg(2+)</name>
        <dbReference type="ChEBI" id="CHEBI:18420"/>
    </ligand>
</feature>
<feature type="modified residue" description="Phosphoserine" evidence="1">
    <location>
        <position position="101"/>
    </location>
</feature>
<accession>Q3KI89</accession>
<comment type="function">
    <text evidence="1">Catalyzes the conversion of glucosamine-6-phosphate to glucosamine-1-phosphate.</text>
</comment>
<comment type="catalytic activity">
    <reaction evidence="1">
        <text>alpha-D-glucosamine 1-phosphate = D-glucosamine 6-phosphate</text>
        <dbReference type="Rhea" id="RHEA:23424"/>
        <dbReference type="ChEBI" id="CHEBI:58516"/>
        <dbReference type="ChEBI" id="CHEBI:58725"/>
        <dbReference type="EC" id="5.4.2.10"/>
    </reaction>
</comment>
<comment type="cofactor">
    <cofactor evidence="1">
        <name>Mg(2+)</name>
        <dbReference type="ChEBI" id="CHEBI:18420"/>
    </cofactor>
    <text evidence="1">Binds 1 Mg(2+) ion per subunit.</text>
</comment>
<comment type="PTM">
    <text evidence="1">Activated by phosphorylation.</text>
</comment>
<comment type="similarity">
    <text evidence="1">Belongs to the phosphohexose mutase family.</text>
</comment>
<reference key="1">
    <citation type="journal article" date="2009" name="Genome Biol.">
        <title>Genomic and genetic analyses of diversity and plant interactions of Pseudomonas fluorescens.</title>
        <authorList>
            <person name="Silby M.W."/>
            <person name="Cerdeno-Tarraga A.M."/>
            <person name="Vernikos G.S."/>
            <person name="Giddens S.R."/>
            <person name="Jackson R.W."/>
            <person name="Preston G.M."/>
            <person name="Zhang X.-X."/>
            <person name="Moon C.D."/>
            <person name="Gehrig S.M."/>
            <person name="Godfrey S.A.C."/>
            <person name="Knight C.G."/>
            <person name="Malone J.G."/>
            <person name="Robinson Z."/>
            <person name="Spiers A.J."/>
            <person name="Harris S."/>
            <person name="Challis G.L."/>
            <person name="Yaxley A.M."/>
            <person name="Harris D."/>
            <person name="Seeger K."/>
            <person name="Murphy L."/>
            <person name="Rutter S."/>
            <person name="Squares R."/>
            <person name="Quail M.A."/>
            <person name="Saunders E."/>
            <person name="Mavromatis K."/>
            <person name="Brettin T.S."/>
            <person name="Bentley S.D."/>
            <person name="Hothersall J."/>
            <person name="Stephens E."/>
            <person name="Thomas C.M."/>
            <person name="Parkhill J."/>
            <person name="Levy S.B."/>
            <person name="Rainey P.B."/>
            <person name="Thomson N.R."/>
        </authorList>
    </citation>
    <scope>NUCLEOTIDE SEQUENCE [LARGE SCALE GENOMIC DNA]</scope>
    <source>
        <strain>Pf0-1</strain>
    </source>
</reference>